<name>RL21_NEIMF</name>
<comment type="function">
    <text evidence="1">This protein binds to 23S rRNA in the presence of protein L20.</text>
</comment>
<comment type="subunit">
    <text evidence="1">Part of the 50S ribosomal subunit. Contacts protein L20.</text>
</comment>
<comment type="similarity">
    <text evidence="1">Belongs to the bacterial ribosomal protein bL21 family.</text>
</comment>
<evidence type="ECO:0000255" key="1">
    <source>
        <dbReference type="HAMAP-Rule" id="MF_01363"/>
    </source>
</evidence>
<evidence type="ECO:0000305" key="2"/>
<keyword id="KW-0687">Ribonucleoprotein</keyword>
<keyword id="KW-0689">Ribosomal protein</keyword>
<keyword id="KW-0694">RNA-binding</keyword>
<keyword id="KW-0699">rRNA-binding</keyword>
<organism>
    <name type="scientific">Neisseria meningitidis serogroup C / serotype 2a (strain ATCC 700532 / DSM 15464 / FAM18)</name>
    <dbReference type="NCBI Taxonomy" id="272831"/>
    <lineage>
        <taxon>Bacteria</taxon>
        <taxon>Pseudomonadati</taxon>
        <taxon>Pseudomonadota</taxon>
        <taxon>Betaproteobacteria</taxon>
        <taxon>Neisseriales</taxon>
        <taxon>Neisseriaceae</taxon>
        <taxon>Neisseria</taxon>
    </lineage>
</organism>
<dbReference type="EMBL" id="AM421808">
    <property type="protein sequence ID" value="CAM11013.1"/>
    <property type="molecule type" value="Genomic_DNA"/>
</dbReference>
<dbReference type="RefSeq" id="WP_002216394.1">
    <property type="nucleotide sequence ID" value="NC_008767.1"/>
</dbReference>
<dbReference type="SMR" id="A1KVV8"/>
<dbReference type="GeneID" id="93387416"/>
<dbReference type="KEGG" id="nmc:NMC1847"/>
<dbReference type="HOGENOM" id="CLU_061463_3_2_4"/>
<dbReference type="Proteomes" id="UP000002286">
    <property type="component" value="Chromosome"/>
</dbReference>
<dbReference type="GO" id="GO:0005737">
    <property type="term" value="C:cytoplasm"/>
    <property type="evidence" value="ECO:0007669"/>
    <property type="project" value="UniProtKB-ARBA"/>
</dbReference>
<dbReference type="GO" id="GO:1990904">
    <property type="term" value="C:ribonucleoprotein complex"/>
    <property type="evidence" value="ECO:0007669"/>
    <property type="project" value="UniProtKB-KW"/>
</dbReference>
<dbReference type="GO" id="GO:0005840">
    <property type="term" value="C:ribosome"/>
    <property type="evidence" value="ECO:0007669"/>
    <property type="project" value="UniProtKB-KW"/>
</dbReference>
<dbReference type="GO" id="GO:0019843">
    <property type="term" value="F:rRNA binding"/>
    <property type="evidence" value="ECO:0007669"/>
    <property type="project" value="UniProtKB-UniRule"/>
</dbReference>
<dbReference type="GO" id="GO:0003735">
    <property type="term" value="F:structural constituent of ribosome"/>
    <property type="evidence" value="ECO:0007669"/>
    <property type="project" value="InterPro"/>
</dbReference>
<dbReference type="GO" id="GO:0006412">
    <property type="term" value="P:translation"/>
    <property type="evidence" value="ECO:0007669"/>
    <property type="project" value="UniProtKB-UniRule"/>
</dbReference>
<dbReference type="HAMAP" id="MF_01363">
    <property type="entry name" value="Ribosomal_bL21"/>
    <property type="match status" value="1"/>
</dbReference>
<dbReference type="InterPro" id="IPR028909">
    <property type="entry name" value="bL21-like"/>
</dbReference>
<dbReference type="InterPro" id="IPR036164">
    <property type="entry name" value="bL21-like_sf"/>
</dbReference>
<dbReference type="InterPro" id="IPR001787">
    <property type="entry name" value="Ribosomal_bL21"/>
</dbReference>
<dbReference type="InterPro" id="IPR018258">
    <property type="entry name" value="Ribosomal_bL21_CS"/>
</dbReference>
<dbReference type="NCBIfam" id="TIGR00061">
    <property type="entry name" value="L21"/>
    <property type="match status" value="1"/>
</dbReference>
<dbReference type="PANTHER" id="PTHR21349">
    <property type="entry name" value="50S RIBOSOMAL PROTEIN L21"/>
    <property type="match status" value="1"/>
</dbReference>
<dbReference type="PANTHER" id="PTHR21349:SF0">
    <property type="entry name" value="LARGE RIBOSOMAL SUBUNIT PROTEIN BL21M"/>
    <property type="match status" value="1"/>
</dbReference>
<dbReference type="Pfam" id="PF00829">
    <property type="entry name" value="Ribosomal_L21p"/>
    <property type="match status" value="1"/>
</dbReference>
<dbReference type="SUPFAM" id="SSF141091">
    <property type="entry name" value="L21p-like"/>
    <property type="match status" value="1"/>
</dbReference>
<dbReference type="PROSITE" id="PS01169">
    <property type="entry name" value="RIBOSOMAL_L21"/>
    <property type="match status" value="1"/>
</dbReference>
<reference key="1">
    <citation type="journal article" date="2007" name="PLoS Genet.">
        <title>Meningococcal genetic variation mechanisms viewed through comparative analysis of serogroup C strain FAM18.</title>
        <authorList>
            <person name="Bentley S.D."/>
            <person name="Vernikos G.S."/>
            <person name="Snyder L.A.S."/>
            <person name="Churcher C."/>
            <person name="Arrowsmith C."/>
            <person name="Chillingworth T."/>
            <person name="Cronin A."/>
            <person name="Davis P.H."/>
            <person name="Holroyd N.E."/>
            <person name="Jagels K."/>
            <person name="Maddison M."/>
            <person name="Moule S."/>
            <person name="Rabbinowitsch E."/>
            <person name="Sharp S."/>
            <person name="Unwin L."/>
            <person name="Whitehead S."/>
            <person name="Quail M.A."/>
            <person name="Achtman M."/>
            <person name="Barrell B.G."/>
            <person name="Saunders N.J."/>
            <person name="Parkhill J."/>
        </authorList>
    </citation>
    <scope>NUCLEOTIDE SEQUENCE [LARGE SCALE GENOMIC DNA]</scope>
    <source>
        <strain>ATCC 700532 / DSM 15464 / FAM18</strain>
    </source>
</reference>
<proteinExistence type="inferred from homology"/>
<feature type="chain" id="PRO_1000067861" description="Large ribosomal subunit protein bL21">
    <location>
        <begin position="1"/>
        <end position="102"/>
    </location>
</feature>
<protein>
    <recommendedName>
        <fullName evidence="1">Large ribosomal subunit protein bL21</fullName>
    </recommendedName>
    <alternativeName>
        <fullName evidence="2">50S ribosomal protein L21</fullName>
    </alternativeName>
</protein>
<gene>
    <name evidence="1" type="primary">rplU</name>
    <name type="ordered locus">NMC1847</name>
</gene>
<sequence length="102" mass="11448">MYAVVKTGGKQYKVSVGEKLKVEQIPAELDSQIELTEVLMIADGESVKVGAPFIEGAKVTAKVVAHGRGEKVRIFKMRRRKHYQKRQGHRQNFTQIEIVAIA</sequence>
<accession>A1KVV8</accession>